<feature type="chain" id="PRO_0000068013" description="Dihydrolipoyl dehydrogenase">
    <location>
        <begin position="1"/>
        <end position="474"/>
    </location>
</feature>
<feature type="active site" description="Proton acceptor" evidence="1">
    <location>
        <position position="453"/>
    </location>
</feature>
<feature type="binding site" evidence="1">
    <location>
        <begin position="34"/>
        <end position="51"/>
    </location>
    <ligand>
        <name>FAD</name>
        <dbReference type="ChEBI" id="CHEBI:57692"/>
    </ligand>
</feature>
<feature type="binding site" evidence="1">
    <location>
        <position position="60"/>
    </location>
    <ligand>
        <name>FAD</name>
        <dbReference type="ChEBI" id="CHEBI:57692"/>
    </ligand>
</feature>
<feature type="binding site" evidence="1">
    <location>
        <position position="124"/>
    </location>
    <ligand>
        <name>FAD</name>
        <dbReference type="ChEBI" id="CHEBI:57692"/>
    </ligand>
</feature>
<feature type="binding site" evidence="1">
    <location>
        <begin position="189"/>
        <end position="193"/>
    </location>
    <ligand>
        <name>NAD(+)</name>
        <dbReference type="ChEBI" id="CHEBI:57540"/>
    </ligand>
</feature>
<feature type="binding site" evidence="1">
    <location>
        <position position="212"/>
    </location>
    <ligand>
        <name>NAD(+)</name>
        <dbReference type="ChEBI" id="CHEBI:57540"/>
    </ligand>
</feature>
<feature type="binding site" evidence="1">
    <location>
        <position position="246"/>
    </location>
    <ligand>
        <name>NAD(+)</name>
        <dbReference type="ChEBI" id="CHEBI:57540"/>
    </ligand>
</feature>
<feature type="binding site" evidence="1">
    <location>
        <begin position="278"/>
        <end position="281"/>
    </location>
    <ligand>
        <name>NAD(+)</name>
        <dbReference type="ChEBI" id="CHEBI:57540"/>
    </ligand>
</feature>
<feature type="binding site" evidence="1">
    <location>
        <position position="321"/>
    </location>
    <ligand>
        <name>FAD</name>
        <dbReference type="ChEBI" id="CHEBI:57692"/>
    </ligand>
</feature>
<feature type="binding site" evidence="1">
    <location>
        <position position="329"/>
    </location>
    <ligand>
        <name>FAD</name>
        <dbReference type="ChEBI" id="CHEBI:57692"/>
    </ligand>
</feature>
<feature type="disulfide bond" description="Redox-active" evidence="1">
    <location>
        <begin position="51"/>
        <end position="56"/>
    </location>
</feature>
<feature type="sequence conflict" description="In Ref. 1; CAA62982." evidence="2" ref="1">
    <original>QL</original>
    <variation>HV</variation>
    <location>
        <begin position="471"/>
        <end position="472"/>
    </location>
</feature>
<reference key="1">
    <citation type="journal article" date="1996" name="FEMS Microbiol. Lett.">
        <title>Cloning and characterization of the Alcaligenes eutrophus 2-oxoglutarate dehydrogenase complex.</title>
        <authorList>
            <person name="Hein S."/>
            <person name="Steinbuechel A."/>
        </authorList>
    </citation>
    <scope>NUCLEOTIDE SEQUENCE [GENOMIC DNA]</scope>
</reference>
<reference key="2">
    <citation type="journal article" date="2006" name="Nat. Biotechnol.">
        <title>Genome sequence of the bioplastic-producing 'Knallgas' bacterium Ralstonia eutropha H16.</title>
        <authorList>
            <person name="Pohlmann A."/>
            <person name="Fricke W.F."/>
            <person name="Reinecke F."/>
            <person name="Kusian B."/>
            <person name="Liesegang H."/>
            <person name="Cramm R."/>
            <person name="Eitinger T."/>
            <person name="Ewering C."/>
            <person name="Poetter M."/>
            <person name="Schwartz E."/>
            <person name="Strittmatter A."/>
            <person name="Voss I."/>
            <person name="Gottschalk G."/>
            <person name="Steinbuechel A."/>
            <person name="Friedrich B."/>
            <person name="Bowien B."/>
        </authorList>
    </citation>
    <scope>NUCLEOTIDE SEQUENCE [LARGE SCALE GENOMIC DNA]</scope>
    <source>
        <strain>ATCC 17699 / DSM 428 / KCTC 22496 / NCIMB 10442 / H16 / Stanier 337</strain>
    </source>
</reference>
<keyword id="KW-0963">Cytoplasm</keyword>
<keyword id="KW-1015">Disulfide bond</keyword>
<keyword id="KW-0274">FAD</keyword>
<keyword id="KW-0285">Flavoprotein</keyword>
<keyword id="KW-0520">NAD</keyword>
<keyword id="KW-0560">Oxidoreductase</keyword>
<keyword id="KW-0676">Redox-active center</keyword>
<keyword id="KW-1185">Reference proteome</keyword>
<accession>P52992</accession>
<accession>Q0K9A2</accession>
<proteinExistence type="inferred from homology"/>
<comment type="function">
    <text>The branched-chain alpha-keto dehydrogenase complex catalyzes the overall conversion of alpha-keto acids to acyl-CoA and CO(2). It contains multiple copies of 3 enzymatic components: branched-chain alpha-keto acid decarboxylase (E1), lipoamide acyltransferase (E2) and lipoamide dehydrogenase (E3).</text>
</comment>
<comment type="catalytic activity">
    <reaction>
        <text>N(6)-[(R)-dihydrolipoyl]-L-lysyl-[protein] + NAD(+) = N(6)-[(R)-lipoyl]-L-lysyl-[protein] + NADH + H(+)</text>
        <dbReference type="Rhea" id="RHEA:15045"/>
        <dbReference type="Rhea" id="RHEA-COMP:10474"/>
        <dbReference type="Rhea" id="RHEA-COMP:10475"/>
        <dbReference type="ChEBI" id="CHEBI:15378"/>
        <dbReference type="ChEBI" id="CHEBI:57540"/>
        <dbReference type="ChEBI" id="CHEBI:57945"/>
        <dbReference type="ChEBI" id="CHEBI:83099"/>
        <dbReference type="ChEBI" id="CHEBI:83100"/>
        <dbReference type="EC" id="1.8.1.4"/>
    </reaction>
</comment>
<comment type="cofactor">
    <cofactor evidence="1">
        <name>FAD</name>
        <dbReference type="ChEBI" id="CHEBI:57692"/>
    </cofactor>
    <text evidence="1">Binds 1 FAD per subunit.</text>
</comment>
<comment type="subcellular location">
    <subcellularLocation>
        <location>Cytoplasm</location>
    </subcellularLocation>
</comment>
<comment type="miscellaneous">
    <text>The active site is a redox-active disulfide bond.</text>
</comment>
<comment type="similarity">
    <text evidence="2">Belongs to the class-I pyridine nucleotide-disulfide oxidoreductase family.</text>
</comment>
<name>DLDH_CUPNH</name>
<organism>
    <name type="scientific">Cupriavidus necator (strain ATCC 17699 / DSM 428 / KCTC 22496 / NCIMB 10442 / H16 / Stanier 337)</name>
    <name type="common">Ralstonia eutropha</name>
    <dbReference type="NCBI Taxonomy" id="381666"/>
    <lineage>
        <taxon>Bacteria</taxon>
        <taxon>Pseudomonadati</taxon>
        <taxon>Pseudomonadota</taxon>
        <taxon>Betaproteobacteria</taxon>
        <taxon>Burkholderiales</taxon>
        <taxon>Burkholderiaceae</taxon>
        <taxon>Cupriavidus</taxon>
    </lineage>
</organism>
<dbReference type="EC" id="1.8.1.4"/>
<dbReference type="EMBL" id="X91877">
    <property type="protein sequence ID" value="CAA62982.1"/>
    <property type="molecule type" value="Genomic_DNA"/>
</dbReference>
<dbReference type="EMBL" id="AM260479">
    <property type="protein sequence ID" value="CAJ93419.1"/>
    <property type="molecule type" value="Genomic_DNA"/>
</dbReference>
<dbReference type="PIR" id="T44424">
    <property type="entry name" value="T44424"/>
</dbReference>
<dbReference type="SMR" id="P52992"/>
<dbReference type="STRING" id="381666.H16_A2323"/>
<dbReference type="KEGG" id="reh:H16_A2323"/>
<dbReference type="eggNOG" id="COG1249">
    <property type="taxonomic scope" value="Bacteria"/>
</dbReference>
<dbReference type="HOGENOM" id="CLU_016755_0_1_4"/>
<dbReference type="OrthoDB" id="178496at2"/>
<dbReference type="Proteomes" id="UP000008210">
    <property type="component" value="Chromosome 1"/>
</dbReference>
<dbReference type="GO" id="GO:0005737">
    <property type="term" value="C:cytoplasm"/>
    <property type="evidence" value="ECO:0007669"/>
    <property type="project" value="UniProtKB-SubCell"/>
</dbReference>
<dbReference type="GO" id="GO:0004148">
    <property type="term" value="F:dihydrolipoyl dehydrogenase (NADH) activity"/>
    <property type="evidence" value="ECO:0007669"/>
    <property type="project" value="UniProtKB-EC"/>
</dbReference>
<dbReference type="GO" id="GO:0050660">
    <property type="term" value="F:flavin adenine dinucleotide binding"/>
    <property type="evidence" value="ECO:0007669"/>
    <property type="project" value="InterPro"/>
</dbReference>
<dbReference type="GO" id="GO:0006103">
    <property type="term" value="P:2-oxoglutarate metabolic process"/>
    <property type="evidence" value="ECO:0007669"/>
    <property type="project" value="TreeGrafter"/>
</dbReference>
<dbReference type="FunFam" id="3.30.390.30:FF:000001">
    <property type="entry name" value="Dihydrolipoyl dehydrogenase"/>
    <property type="match status" value="1"/>
</dbReference>
<dbReference type="Gene3D" id="3.30.390.30">
    <property type="match status" value="1"/>
</dbReference>
<dbReference type="Gene3D" id="3.50.50.60">
    <property type="entry name" value="FAD/NAD(P)-binding domain"/>
    <property type="match status" value="2"/>
</dbReference>
<dbReference type="InterPro" id="IPR050151">
    <property type="entry name" value="Class-I_Pyr_Nuc-Dis_Oxidored"/>
</dbReference>
<dbReference type="InterPro" id="IPR036188">
    <property type="entry name" value="FAD/NAD-bd_sf"/>
</dbReference>
<dbReference type="InterPro" id="IPR023753">
    <property type="entry name" value="FAD/NAD-binding_dom"/>
</dbReference>
<dbReference type="InterPro" id="IPR016156">
    <property type="entry name" value="FAD/NAD-linked_Rdtase_dimer_sf"/>
</dbReference>
<dbReference type="InterPro" id="IPR006258">
    <property type="entry name" value="Lipoamide_DH"/>
</dbReference>
<dbReference type="InterPro" id="IPR001100">
    <property type="entry name" value="Pyr_nuc-diS_OxRdtase"/>
</dbReference>
<dbReference type="InterPro" id="IPR004099">
    <property type="entry name" value="Pyr_nucl-diS_OxRdtase_dimer"/>
</dbReference>
<dbReference type="InterPro" id="IPR012999">
    <property type="entry name" value="Pyr_OxRdtase_I_AS"/>
</dbReference>
<dbReference type="NCBIfam" id="TIGR01350">
    <property type="entry name" value="lipoamide_DH"/>
    <property type="match status" value="1"/>
</dbReference>
<dbReference type="PANTHER" id="PTHR22912:SF224">
    <property type="entry name" value="DIHYDROLIPOYL DEHYDROGENASE"/>
    <property type="match status" value="1"/>
</dbReference>
<dbReference type="PANTHER" id="PTHR22912">
    <property type="entry name" value="DISULFIDE OXIDOREDUCTASE"/>
    <property type="match status" value="1"/>
</dbReference>
<dbReference type="Pfam" id="PF07992">
    <property type="entry name" value="Pyr_redox_2"/>
    <property type="match status" value="1"/>
</dbReference>
<dbReference type="Pfam" id="PF02852">
    <property type="entry name" value="Pyr_redox_dim"/>
    <property type="match status" value="1"/>
</dbReference>
<dbReference type="PIRSF" id="PIRSF000350">
    <property type="entry name" value="Mercury_reductase_MerA"/>
    <property type="match status" value="1"/>
</dbReference>
<dbReference type="PRINTS" id="PR00368">
    <property type="entry name" value="FADPNR"/>
</dbReference>
<dbReference type="PRINTS" id="PR00411">
    <property type="entry name" value="PNDRDTASEI"/>
</dbReference>
<dbReference type="SUPFAM" id="SSF51905">
    <property type="entry name" value="FAD/NAD(P)-binding domain"/>
    <property type="match status" value="1"/>
</dbReference>
<dbReference type="SUPFAM" id="SSF55424">
    <property type="entry name" value="FAD/NAD-linked reductases, dimerisation (C-terminal) domain"/>
    <property type="match status" value="1"/>
</dbReference>
<dbReference type="PROSITE" id="PS00076">
    <property type="entry name" value="PYRIDINE_REDOX_1"/>
    <property type="match status" value="1"/>
</dbReference>
<evidence type="ECO:0000250" key="1"/>
<evidence type="ECO:0000305" key="2"/>
<protein>
    <recommendedName>
        <fullName>Dihydrolipoyl dehydrogenase</fullName>
        <ecNumber>1.8.1.4</ecNumber>
    </recommendedName>
    <alternativeName>
        <fullName>Dihydrolipoamide dehydrogenase</fullName>
    </alternativeName>
    <alternativeName>
        <fullName>E3 component of 2-oxoglutarate dehydrogenase complex</fullName>
    </alternativeName>
</protein>
<sequence>MSKQFDVLVIGAGPGGYIAAIRAGQLGLNVACCEGNPYDDPKGEARLGGTCLNVGCIPSKALLASSEEFENVQHHLGDHGITVGDVKVDVAKMLKRKDDIVGKMTKGIEFLFRKNKVTLLKGYGKFVGKSAEGFQVDVAGEVVTAKQVIIATGSKARHLPGIKVDNDLVSDNEGALKFPAVPKKLGVIGAGVIGLELGSVWRRLGSDVTVLEALPAFLGAADEGVAKEAQKQLTKQGLKFSLGVNVNEVTTGKNGVTVKYTDKDGKAQTLEVDRLIVSVGRVPNTDNLGLDAVGLAADQRGFIEVDDHCATKVPGLWAIGDVVRGPMLAHKAEDEGVAVAERIAGQKPHIDYNCVPWVIYTFPEIAWVGKTEAQLKAEGREYKAGQFPFMANGRALGMGHADGFVKMLADAKTDEILGVHIVAANASDLIAEAVVAMEFKAASEDIGRVCHPHPSMSEVMREAALAVDKRQLNM</sequence>
<gene>
    <name type="primary">odhL</name>
    <name type="ordered locus">H16_A2323</name>
</gene>